<sequence>MLRPKALTQVLSQANTGGVQSTLLLNNEGSLLAYSGYGDTDARVTAAIASNIWAAYDRNGNQAFNEDSLKFILMDCMEGRVAITRVANLLLCMYAKETVGFGMLKAKAQALVQYLEEPLTQVAAS</sequence>
<accession>Q9JHS3</accession>
<reference key="1">
    <citation type="journal article" date="2001" name="J. Cell Biol.">
        <title>A novel 14-kilodalton protein interacts with the mitogen-activated protein kinase scaffold mp1 on a late endosomal/lysosomal compartment.</title>
        <authorList>
            <person name="Wunderlich W."/>
            <person name="Fialka I."/>
            <person name="Teis D."/>
            <person name="Alpi A."/>
            <person name="Pfeifer A."/>
            <person name="Parton R.G."/>
            <person name="Lottspeich F."/>
            <person name="Huber L.A."/>
        </authorList>
    </citation>
    <scope>NUCLEOTIDE SEQUENCE [MRNA]</scope>
    <scope>PARTIAL PROTEIN SEQUENCE</scope>
    <scope>INTERACTION WITH LAMTOR3; MAPK1 AND MAP2K1</scope>
    <scope>TISSUE SPECIFICITY</scope>
    <scope>SUBCELLULAR LOCATION</scope>
</reference>
<reference key="2">
    <citation type="journal article" date="2005" name="Science">
        <title>The transcriptional landscape of the mammalian genome.</title>
        <authorList>
            <person name="Carninci P."/>
            <person name="Kasukawa T."/>
            <person name="Katayama S."/>
            <person name="Gough J."/>
            <person name="Frith M.C."/>
            <person name="Maeda N."/>
            <person name="Oyama R."/>
            <person name="Ravasi T."/>
            <person name="Lenhard B."/>
            <person name="Wells C."/>
            <person name="Kodzius R."/>
            <person name="Shimokawa K."/>
            <person name="Bajic V.B."/>
            <person name="Brenner S.E."/>
            <person name="Batalov S."/>
            <person name="Forrest A.R."/>
            <person name="Zavolan M."/>
            <person name="Davis M.J."/>
            <person name="Wilming L.G."/>
            <person name="Aidinis V."/>
            <person name="Allen J.E."/>
            <person name="Ambesi-Impiombato A."/>
            <person name="Apweiler R."/>
            <person name="Aturaliya R.N."/>
            <person name="Bailey T.L."/>
            <person name="Bansal M."/>
            <person name="Baxter L."/>
            <person name="Beisel K.W."/>
            <person name="Bersano T."/>
            <person name="Bono H."/>
            <person name="Chalk A.M."/>
            <person name="Chiu K.P."/>
            <person name="Choudhary V."/>
            <person name="Christoffels A."/>
            <person name="Clutterbuck D.R."/>
            <person name="Crowe M.L."/>
            <person name="Dalla E."/>
            <person name="Dalrymple B.P."/>
            <person name="de Bono B."/>
            <person name="Della Gatta G."/>
            <person name="di Bernardo D."/>
            <person name="Down T."/>
            <person name="Engstrom P."/>
            <person name="Fagiolini M."/>
            <person name="Faulkner G."/>
            <person name="Fletcher C.F."/>
            <person name="Fukushima T."/>
            <person name="Furuno M."/>
            <person name="Futaki S."/>
            <person name="Gariboldi M."/>
            <person name="Georgii-Hemming P."/>
            <person name="Gingeras T.R."/>
            <person name="Gojobori T."/>
            <person name="Green R.E."/>
            <person name="Gustincich S."/>
            <person name="Harbers M."/>
            <person name="Hayashi Y."/>
            <person name="Hensch T.K."/>
            <person name="Hirokawa N."/>
            <person name="Hill D."/>
            <person name="Huminiecki L."/>
            <person name="Iacono M."/>
            <person name="Ikeo K."/>
            <person name="Iwama A."/>
            <person name="Ishikawa T."/>
            <person name="Jakt M."/>
            <person name="Kanapin A."/>
            <person name="Katoh M."/>
            <person name="Kawasawa Y."/>
            <person name="Kelso J."/>
            <person name="Kitamura H."/>
            <person name="Kitano H."/>
            <person name="Kollias G."/>
            <person name="Krishnan S.P."/>
            <person name="Kruger A."/>
            <person name="Kummerfeld S.K."/>
            <person name="Kurochkin I.V."/>
            <person name="Lareau L.F."/>
            <person name="Lazarevic D."/>
            <person name="Lipovich L."/>
            <person name="Liu J."/>
            <person name="Liuni S."/>
            <person name="McWilliam S."/>
            <person name="Madan Babu M."/>
            <person name="Madera M."/>
            <person name="Marchionni L."/>
            <person name="Matsuda H."/>
            <person name="Matsuzawa S."/>
            <person name="Miki H."/>
            <person name="Mignone F."/>
            <person name="Miyake S."/>
            <person name="Morris K."/>
            <person name="Mottagui-Tabar S."/>
            <person name="Mulder N."/>
            <person name="Nakano N."/>
            <person name="Nakauchi H."/>
            <person name="Ng P."/>
            <person name="Nilsson R."/>
            <person name="Nishiguchi S."/>
            <person name="Nishikawa S."/>
            <person name="Nori F."/>
            <person name="Ohara O."/>
            <person name="Okazaki Y."/>
            <person name="Orlando V."/>
            <person name="Pang K.C."/>
            <person name="Pavan W.J."/>
            <person name="Pavesi G."/>
            <person name="Pesole G."/>
            <person name="Petrovsky N."/>
            <person name="Piazza S."/>
            <person name="Reed J."/>
            <person name="Reid J.F."/>
            <person name="Ring B.Z."/>
            <person name="Ringwald M."/>
            <person name="Rost B."/>
            <person name="Ruan Y."/>
            <person name="Salzberg S.L."/>
            <person name="Sandelin A."/>
            <person name="Schneider C."/>
            <person name="Schoenbach C."/>
            <person name="Sekiguchi K."/>
            <person name="Semple C.A."/>
            <person name="Seno S."/>
            <person name="Sessa L."/>
            <person name="Sheng Y."/>
            <person name="Shibata Y."/>
            <person name="Shimada H."/>
            <person name="Shimada K."/>
            <person name="Silva D."/>
            <person name="Sinclair B."/>
            <person name="Sperling S."/>
            <person name="Stupka E."/>
            <person name="Sugiura K."/>
            <person name="Sultana R."/>
            <person name="Takenaka Y."/>
            <person name="Taki K."/>
            <person name="Tammoja K."/>
            <person name="Tan S.L."/>
            <person name="Tang S."/>
            <person name="Taylor M.S."/>
            <person name="Tegner J."/>
            <person name="Teichmann S.A."/>
            <person name="Ueda H.R."/>
            <person name="van Nimwegen E."/>
            <person name="Verardo R."/>
            <person name="Wei C.L."/>
            <person name="Yagi K."/>
            <person name="Yamanishi H."/>
            <person name="Zabarovsky E."/>
            <person name="Zhu S."/>
            <person name="Zimmer A."/>
            <person name="Hide W."/>
            <person name="Bult C."/>
            <person name="Grimmond S.M."/>
            <person name="Teasdale R.D."/>
            <person name="Liu E.T."/>
            <person name="Brusic V."/>
            <person name="Quackenbush J."/>
            <person name="Wahlestedt C."/>
            <person name="Mattick J.S."/>
            <person name="Hume D.A."/>
            <person name="Kai C."/>
            <person name="Sasaki D."/>
            <person name="Tomaru Y."/>
            <person name="Fukuda S."/>
            <person name="Kanamori-Katayama M."/>
            <person name="Suzuki M."/>
            <person name="Aoki J."/>
            <person name="Arakawa T."/>
            <person name="Iida J."/>
            <person name="Imamura K."/>
            <person name="Itoh M."/>
            <person name="Kato T."/>
            <person name="Kawaji H."/>
            <person name="Kawagashira N."/>
            <person name="Kawashima T."/>
            <person name="Kojima M."/>
            <person name="Kondo S."/>
            <person name="Konno H."/>
            <person name="Nakano K."/>
            <person name="Ninomiya N."/>
            <person name="Nishio T."/>
            <person name="Okada M."/>
            <person name="Plessy C."/>
            <person name="Shibata K."/>
            <person name="Shiraki T."/>
            <person name="Suzuki S."/>
            <person name="Tagami M."/>
            <person name="Waki K."/>
            <person name="Watahiki A."/>
            <person name="Okamura-Oho Y."/>
            <person name="Suzuki H."/>
            <person name="Kawai J."/>
            <person name="Hayashizaki Y."/>
        </authorList>
    </citation>
    <scope>NUCLEOTIDE SEQUENCE [LARGE SCALE MRNA]</scope>
    <source>
        <strain>C57BL/6J</strain>
        <tissue>Pancreas</tissue>
    </source>
</reference>
<reference key="3">
    <citation type="journal article" date="2004" name="Genome Res.">
        <title>The status, quality, and expansion of the NIH full-length cDNA project: the Mammalian Gene Collection (MGC).</title>
        <authorList>
            <consortium name="The MGC Project Team"/>
        </authorList>
    </citation>
    <scope>NUCLEOTIDE SEQUENCE [LARGE SCALE MRNA]</scope>
    <source>
        <strain>FVB/N</strain>
        <tissue>Salivary gland</tissue>
    </source>
</reference>
<reference key="4">
    <citation type="journal article" date="2009" name="EMBO J.">
        <title>The novel lipid raft adaptor p18 controls endosome dynamics by anchoring the MEK-ERK pathway to late endosomes.</title>
        <authorList>
            <person name="Nada S."/>
            <person name="Hondo A."/>
            <person name="Kasai A."/>
            <person name="Koike M."/>
            <person name="Saito K."/>
            <person name="Uchiyama Y."/>
            <person name="Okada M."/>
        </authorList>
    </citation>
    <scope>PROTEIN SEQUENCE OF 97-105</scope>
    <scope>INTERACTION WITH LAMTOR1</scope>
    <scope>SUBCELLULAR LOCATION</scope>
</reference>
<reference key="5">
    <citation type="journal article" date="2010" name="Cell">
        <title>A tissue-specific atlas of mouse protein phosphorylation and expression.</title>
        <authorList>
            <person name="Huttlin E.L."/>
            <person name="Jedrychowski M.P."/>
            <person name="Elias J.E."/>
            <person name="Goswami T."/>
            <person name="Rad R."/>
            <person name="Beausoleil S.A."/>
            <person name="Villen J."/>
            <person name="Haas W."/>
            <person name="Sowa M.E."/>
            <person name="Gygi S.P."/>
        </authorList>
    </citation>
    <scope>IDENTIFICATION BY MASS SPECTROMETRY [LARGE SCALE ANALYSIS]</scope>
    <source>
        <tissue>Brain</tissue>
        <tissue>Brown adipose tissue</tissue>
        <tissue>Heart</tissue>
        <tissue>Kidney</tissue>
        <tissue>Liver</tissue>
        <tissue>Lung</tissue>
        <tissue>Pancreas</tissue>
        <tissue>Spleen</tissue>
        <tissue>Testis</tissue>
    </source>
</reference>
<reference key="6">
    <citation type="journal article" date="2004" name="J. Biol. Chem.">
        <title>The structure of the MAPK scaffold, MP1, bound to its partner, p14. A complex with a critical role in endosomal MAP kinase signaling.</title>
        <authorList>
            <person name="Lunin V.V."/>
            <person name="Munger C."/>
            <person name="Wagner J."/>
            <person name="Ye Z."/>
            <person name="Cygler M."/>
            <person name="Sacher M."/>
        </authorList>
    </citation>
    <scope>X-RAY CRYSTALLOGRAPHY (2.0 ANGSTROMS) OF 2-124 IN COMPLEX WITH LAMTOR3</scope>
</reference>
<reference key="7">
    <citation type="journal article" date="2004" name="Proc. Natl. Acad. Sci. U.S.A.">
        <title>Crystal structure of the p14/MP1 scaffolding complex: how a twin couple attaches mitogen-activated protein kinase signaling to late endosomes.</title>
        <authorList>
            <person name="Kurzbauer R."/>
            <person name="Teis D."/>
            <person name="de Araujo M.E.G."/>
            <person name="Maurer-Stroh S."/>
            <person name="Eisenhaber F."/>
            <person name="Bourenkov G.P."/>
            <person name="Bartunik H.D."/>
            <person name="Hekman M."/>
            <person name="Rapp U.R."/>
            <person name="Huber L.A."/>
            <person name="Clausen T."/>
        </authorList>
    </citation>
    <scope>X-RAY CRYSTALLOGRAPHY (1.9 ANGSTROMS) IN COMPLEX WITH LAMTOR3</scope>
    <scope>FUNCTION</scope>
    <scope>SUBCELLULAR LOCATION</scope>
</reference>
<reference key="8">
    <citation type="journal article" date="2005" name="J. Mol. Biol.">
        <title>Structure of the adaptor protein p14 reveals a profilin-like fold with distinct function.</title>
        <authorList>
            <person name="Qian C."/>
            <person name="Zhang Q."/>
            <person name="Wang X."/>
            <person name="Zeng L."/>
            <person name="Farooq A."/>
            <person name="Zhou M.-M."/>
        </authorList>
    </citation>
    <scope>STRUCTURE BY NMR</scope>
    <scope>INTERACTION WITH LAMTOR3</scope>
</reference>
<proteinExistence type="evidence at protein level"/>
<evidence type="ECO:0000250" key="1">
    <source>
        <dbReference type="UniProtKB" id="Q9Y2Q5"/>
    </source>
</evidence>
<evidence type="ECO:0000269" key="2">
    <source>
    </source>
</evidence>
<evidence type="ECO:0000269" key="3">
    <source>
    </source>
</evidence>
<evidence type="ECO:0000269" key="4">
    <source>
    </source>
</evidence>
<evidence type="ECO:0000269" key="5">
    <source>
    </source>
</evidence>
<evidence type="ECO:0000269" key="6">
    <source>
    </source>
</evidence>
<evidence type="ECO:0000305" key="7"/>
<evidence type="ECO:0007829" key="8">
    <source>
        <dbReference type="PDB" id="1SZV"/>
    </source>
</evidence>
<evidence type="ECO:0007829" key="9">
    <source>
        <dbReference type="PDB" id="1VET"/>
    </source>
</evidence>
<evidence type="ECO:0007829" key="10">
    <source>
        <dbReference type="PDB" id="1VEU"/>
    </source>
</evidence>
<gene>
    <name type="primary">Lamtor2</name>
    <name type="synonym">Mapbpip</name>
    <name type="synonym">Robld3</name>
</gene>
<protein>
    <recommendedName>
        <fullName>Ragulator complex protein LAMTOR2</fullName>
    </recommendedName>
    <alternativeName>
        <fullName>Endosomal adaptor protein p14</fullName>
    </alternativeName>
    <alternativeName>
        <fullName>Late endosomal/lysosomal Mp1-interacting protein</fullName>
    </alternativeName>
    <alternativeName>
        <fullName>Late endosomal/lysosomal adaptor and MAPK and MTOR activator 2</fullName>
    </alternativeName>
    <alternativeName>
        <fullName>Mitogen-activated protein-binding protein-interacting protein</fullName>
    </alternativeName>
    <alternativeName>
        <fullName>Roadblock domain-containing protein 3</fullName>
    </alternativeName>
</protein>
<keyword id="KW-0002">3D-structure</keyword>
<keyword id="KW-0903">Direct protein sequencing</keyword>
<keyword id="KW-0967">Endosome</keyword>
<keyword id="KW-0458">Lysosome</keyword>
<keyword id="KW-0472">Membrane</keyword>
<keyword id="KW-1185">Reference proteome</keyword>
<comment type="function">
    <text evidence="1 4">As part of the Ragulator complex it is involved in amino acid sensing and activation of mTORC1, a signaling complex promoting cell growth in response to growth factors, energy levels, and amino acids (By similarity). Activated by amino acids through a mechanism involving the lysosomal V-ATPase, the Ragulator plays a dual role for the small GTPases Rag (RagA/RRAGA, RagB/RRAGB, RagC/RRAGC and/or RagD/RRAGD): it (1) acts as a guanine nucleotide exchange factor (GEF), activating the small GTPases Rag and (2) mediates recruitment of Rag GTPases to the lysosome membrane (By similarity). Activated Ragulator and Rag GTPases function as a scaffold recruiting mTORC1 to lysosomes where it is in turn activated (By similarity). Adapter protein that enhances the efficiency of the MAP kinase cascade facilitating the activation of MAPK2 (PubMed:15263099).</text>
</comment>
<comment type="subunit">
    <text evidence="1 2 3 4 5 6">Part of the Ragulator complex composed of LAMTOR1, LAMTOR2, LAMTOR3, LAMTOR4 and LAMTOR5 (PubMed:15016825, PubMed:15263099, PubMed:15740743, PubMed:19177150). LAMTOR4 and LAMTOR5 form a heterodimer that interacts, through LAMTOR1, with a LAMTOR2, LAMTOR3 heterodimer (PubMed:15016825, PubMed:15263099, PubMed:15740743, PubMed:19177150). The Ragulator complex interacts with both the mTORC1 complex and heterodimers constituted of the Rag GTPases RagA/RRAGA, RagB/RRAGB, RagC/RRAGC and RagD/RRAGD; regulated by amino acid availability (PubMed:15016825, PubMed:15263099, PubMed:15740743, PubMed:19177150). The Ragulator complex interacts with SLC38A9; the probable amino acid sensor (By similarity). Interacts with LAMTOR1 and LAMTOR3; the interaction is direct. Interacts with MAPK1 and MAP2K1 (PubMed:11266467). Component of the lysosomal folliculin complex (LFC), composed of FLCN, FNIP1 (or FNIP2), RagA/RRAGA or RagB/RRAGB GDP-bound, RagC/RRAGC or RagD/RRAGD GTP-bound, and Ragulator (By similarity).</text>
</comment>
<comment type="interaction">
    <interactant intactId="EBI-1038198">
        <id>Q9JHS3</id>
    </interactant>
    <interactant intactId="EBI-1039530">
        <id>O88653</id>
        <label>Lamtor3</label>
    </interactant>
    <organismsDiffer>false</organismsDiffer>
    <experiments>2</experiments>
</comment>
<comment type="interaction">
    <interactant intactId="EBI-1038198">
        <id>Q9JHS3</id>
    </interactant>
    <interactant intactId="EBI-919067">
        <id>Q6P791</id>
        <label>Lamtor1</label>
    </interactant>
    <organismsDiffer>true</organismsDiffer>
    <experiments>4</experiments>
</comment>
<comment type="subcellular location">
    <subcellularLocation>
        <location evidence="2 4 6">Late endosome membrane</location>
        <topology evidence="6">Peripheral membrane protein</topology>
        <orientation evidence="6">Cytoplasmic side</orientation>
    </subcellularLocation>
    <subcellularLocation>
        <location evidence="2">Lysosome membrane</location>
        <topology evidence="6">Peripheral membrane protein</topology>
        <orientation evidence="6">Cytoplasmic side</orientation>
    </subcellularLocation>
    <text evidence="6">Recruited to lysosome and endosome membranes by LAMTOR1.</text>
</comment>
<comment type="tissue specificity">
    <text evidence="2">Ubiquitous.</text>
</comment>
<comment type="similarity">
    <text evidence="7">Belongs to the GAMAD family.</text>
</comment>
<feature type="chain" id="PRO_0000220961" description="Ragulator complex protein LAMTOR2">
    <location>
        <begin position="1"/>
        <end position="125"/>
    </location>
</feature>
<feature type="region of interest" description="Required for location at endosomes">
    <location>
        <begin position="57"/>
        <end position="70"/>
    </location>
</feature>
<feature type="helix" evidence="9">
    <location>
        <begin position="4"/>
        <end position="14"/>
    </location>
</feature>
<feature type="strand" evidence="8">
    <location>
        <begin position="15"/>
        <end position="18"/>
    </location>
</feature>
<feature type="strand" evidence="9">
    <location>
        <begin position="19"/>
        <end position="25"/>
    </location>
</feature>
<feature type="turn" evidence="8">
    <location>
        <begin position="27"/>
        <end position="29"/>
    </location>
</feature>
<feature type="strand" evidence="9">
    <location>
        <begin position="31"/>
        <end position="36"/>
    </location>
</feature>
<feature type="strand" evidence="10">
    <location>
        <begin position="38"/>
        <end position="40"/>
    </location>
</feature>
<feature type="helix" evidence="9">
    <location>
        <begin position="42"/>
        <end position="60"/>
    </location>
</feature>
<feature type="turn" evidence="9">
    <location>
        <begin position="63"/>
        <end position="65"/>
    </location>
</feature>
<feature type="strand" evidence="9">
    <location>
        <begin position="71"/>
        <end position="76"/>
    </location>
</feature>
<feature type="strand" evidence="9">
    <location>
        <begin position="79"/>
        <end position="86"/>
    </location>
</feature>
<feature type="strand" evidence="9">
    <location>
        <begin position="89"/>
        <end position="95"/>
    </location>
</feature>
<feature type="helix" evidence="9">
    <location>
        <begin position="101"/>
        <end position="116"/>
    </location>
</feature>
<feature type="helix" evidence="10">
    <location>
        <begin position="118"/>
        <end position="120"/>
    </location>
</feature>
<dbReference type="EMBL" id="AJ277386">
    <property type="protein sequence ID" value="CAB97177.1"/>
    <property type="molecule type" value="mRNA"/>
</dbReference>
<dbReference type="EMBL" id="AK019006">
    <property type="protein sequence ID" value="BAB31506.1"/>
    <property type="molecule type" value="mRNA"/>
</dbReference>
<dbReference type="EMBL" id="BC031816">
    <property type="protein sequence ID" value="AAH31816.1"/>
    <property type="molecule type" value="mRNA"/>
</dbReference>
<dbReference type="CCDS" id="CCDS17478.1"/>
<dbReference type="RefSeq" id="NP_112538.1">
    <property type="nucleotide sequence ID" value="NM_031248.4"/>
</dbReference>
<dbReference type="PDB" id="1SKO">
    <property type="method" value="X-ray"/>
    <property type="resolution" value="2.00 A"/>
    <property type="chains" value="B=2-124"/>
</dbReference>
<dbReference type="PDB" id="1SZV">
    <property type="method" value="NMR"/>
    <property type="chains" value="A=1-125"/>
</dbReference>
<dbReference type="PDB" id="1VET">
    <property type="method" value="X-ray"/>
    <property type="resolution" value="1.90 A"/>
    <property type="chains" value="B=1-125"/>
</dbReference>
<dbReference type="PDB" id="1VEU">
    <property type="method" value="X-ray"/>
    <property type="resolution" value="2.15 A"/>
    <property type="chains" value="B=1-125"/>
</dbReference>
<dbReference type="PDB" id="2ZL1">
    <property type="method" value="X-ray"/>
    <property type="resolution" value="2.00 A"/>
    <property type="chains" value="B=2-125"/>
</dbReference>
<dbReference type="PDB" id="3CPT">
    <property type="method" value="X-ray"/>
    <property type="resolution" value="1.90 A"/>
    <property type="chains" value="B=2-125"/>
</dbReference>
<dbReference type="PDBsum" id="1SKO"/>
<dbReference type="PDBsum" id="1SZV"/>
<dbReference type="PDBsum" id="1VET"/>
<dbReference type="PDBsum" id="1VEU"/>
<dbReference type="PDBsum" id="2ZL1"/>
<dbReference type="PDBsum" id="3CPT"/>
<dbReference type="BMRB" id="Q9JHS3"/>
<dbReference type="SMR" id="Q9JHS3"/>
<dbReference type="BioGRID" id="219917">
    <property type="interactions" value="7"/>
</dbReference>
<dbReference type="ComplexPortal" id="CPX-4761">
    <property type="entry name" value="Ragulator complex"/>
</dbReference>
<dbReference type="CORUM" id="Q9JHS3"/>
<dbReference type="FunCoup" id="Q9JHS3">
    <property type="interactions" value="1131"/>
</dbReference>
<dbReference type="IntAct" id="Q9JHS3">
    <property type="interactions" value="5"/>
</dbReference>
<dbReference type="MINT" id="Q9JHS3"/>
<dbReference type="STRING" id="10090.ENSMUSP00000029698"/>
<dbReference type="iPTMnet" id="Q9JHS3"/>
<dbReference type="PhosphoSitePlus" id="Q9JHS3"/>
<dbReference type="jPOST" id="Q9JHS3"/>
<dbReference type="PaxDb" id="10090-ENSMUSP00000029698"/>
<dbReference type="PeptideAtlas" id="Q9JHS3"/>
<dbReference type="ProteomicsDB" id="292049"/>
<dbReference type="Pumba" id="Q9JHS3"/>
<dbReference type="Antibodypedia" id="1218">
    <property type="antibodies" value="97 antibodies from 24 providers"/>
</dbReference>
<dbReference type="DNASU" id="83409"/>
<dbReference type="Ensembl" id="ENSMUST00000029698.15">
    <property type="protein sequence ID" value="ENSMUSP00000029698.9"/>
    <property type="gene ID" value="ENSMUSG00000028062.16"/>
</dbReference>
<dbReference type="GeneID" id="83409"/>
<dbReference type="KEGG" id="mmu:83409"/>
<dbReference type="UCSC" id="uc008pvo.1">
    <property type="organism name" value="mouse"/>
</dbReference>
<dbReference type="AGR" id="MGI:1932697"/>
<dbReference type="CTD" id="28956"/>
<dbReference type="MGI" id="MGI:1932697">
    <property type="gene designation" value="Lamtor2"/>
</dbReference>
<dbReference type="VEuPathDB" id="HostDB:ENSMUSG00000028062"/>
<dbReference type="eggNOG" id="KOG4107">
    <property type="taxonomic scope" value="Eukaryota"/>
</dbReference>
<dbReference type="GeneTree" id="ENSGT00390000006100"/>
<dbReference type="HOGENOM" id="CLU_141118_0_0_1"/>
<dbReference type="InParanoid" id="Q9JHS3"/>
<dbReference type="OMA" id="WAAYEKN"/>
<dbReference type="OrthoDB" id="16708at9989"/>
<dbReference type="PhylomeDB" id="Q9JHS3"/>
<dbReference type="TreeFam" id="TF313929"/>
<dbReference type="Reactome" id="R-MMU-1632852">
    <property type="pathway name" value="Macroautophagy"/>
</dbReference>
<dbReference type="Reactome" id="R-MMU-165159">
    <property type="pathway name" value="MTOR signalling"/>
</dbReference>
<dbReference type="Reactome" id="R-MMU-166208">
    <property type="pathway name" value="mTORC1-mediated signalling"/>
</dbReference>
<dbReference type="Reactome" id="R-MMU-380972">
    <property type="pathway name" value="Energy dependent regulation of mTOR by LKB1-AMPK"/>
</dbReference>
<dbReference type="Reactome" id="R-MMU-5628897">
    <property type="pathway name" value="TP53 Regulates Metabolic Genes"/>
</dbReference>
<dbReference type="Reactome" id="R-MMU-5674135">
    <property type="pathway name" value="MAP2K and MAPK activation"/>
</dbReference>
<dbReference type="Reactome" id="R-MMU-6798695">
    <property type="pathway name" value="Neutrophil degranulation"/>
</dbReference>
<dbReference type="Reactome" id="R-MMU-8943724">
    <property type="pathway name" value="Regulation of PTEN gene transcription"/>
</dbReference>
<dbReference type="Reactome" id="R-MMU-9639288">
    <property type="pathway name" value="Amino acids regulate mTORC1"/>
</dbReference>
<dbReference type="BioGRID-ORCS" id="83409">
    <property type="hits" value="29 hits in 79 CRISPR screens"/>
</dbReference>
<dbReference type="ChiTaRS" id="Lamtor2">
    <property type="organism name" value="mouse"/>
</dbReference>
<dbReference type="EvolutionaryTrace" id="Q9JHS3"/>
<dbReference type="PRO" id="PR:Q9JHS3"/>
<dbReference type="Proteomes" id="UP000000589">
    <property type="component" value="Chromosome 3"/>
</dbReference>
<dbReference type="RNAct" id="Q9JHS3">
    <property type="molecule type" value="protein"/>
</dbReference>
<dbReference type="Bgee" id="ENSMUSG00000028062">
    <property type="expression patterns" value="Expressed in right kidney and 262 other cell types or tissues"/>
</dbReference>
<dbReference type="ExpressionAtlas" id="Q9JHS3">
    <property type="expression patterns" value="baseline and differential"/>
</dbReference>
<dbReference type="GO" id="GO:1990877">
    <property type="term" value="C:FNIP-folliculin RagC/D GAP"/>
    <property type="evidence" value="ECO:0007669"/>
    <property type="project" value="Ensembl"/>
</dbReference>
<dbReference type="GO" id="GO:0005770">
    <property type="term" value="C:late endosome"/>
    <property type="evidence" value="ECO:0000314"/>
    <property type="project" value="UniProtKB"/>
</dbReference>
<dbReference type="GO" id="GO:0031902">
    <property type="term" value="C:late endosome membrane"/>
    <property type="evidence" value="ECO:0000303"/>
    <property type="project" value="ComplexPortal"/>
</dbReference>
<dbReference type="GO" id="GO:0005765">
    <property type="term" value="C:lysosomal membrane"/>
    <property type="evidence" value="ECO:0000250"/>
    <property type="project" value="UniProtKB"/>
</dbReference>
<dbReference type="GO" id="GO:0071986">
    <property type="term" value="C:Ragulator complex"/>
    <property type="evidence" value="ECO:0000250"/>
    <property type="project" value="UniProtKB"/>
</dbReference>
<dbReference type="GO" id="GO:0005085">
    <property type="term" value="F:guanyl-nucleotide exchange factor activity"/>
    <property type="evidence" value="ECO:0007669"/>
    <property type="project" value="Ensembl"/>
</dbReference>
<dbReference type="GO" id="GO:0060090">
    <property type="term" value="F:molecular adaptor activity"/>
    <property type="evidence" value="ECO:0007669"/>
    <property type="project" value="Ensembl"/>
</dbReference>
<dbReference type="GO" id="GO:0071230">
    <property type="term" value="P:cellular response to amino acid stimulus"/>
    <property type="evidence" value="ECO:0000250"/>
    <property type="project" value="UniProtKB"/>
</dbReference>
<dbReference type="GO" id="GO:0010761">
    <property type="term" value="P:fibroblast migration"/>
    <property type="evidence" value="ECO:0000314"/>
    <property type="project" value="MGI"/>
</dbReference>
<dbReference type="GO" id="GO:0043410">
    <property type="term" value="P:positive regulation of MAPK cascade"/>
    <property type="evidence" value="ECO:0000314"/>
    <property type="project" value="MGI"/>
</dbReference>
<dbReference type="GO" id="GO:0032008">
    <property type="term" value="P:positive regulation of TOR signaling"/>
    <property type="evidence" value="ECO:0000250"/>
    <property type="project" value="UniProtKB"/>
</dbReference>
<dbReference type="GO" id="GO:1904263">
    <property type="term" value="P:positive regulation of TORC1 signaling"/>
    <property type="evidence" value="ECO:0000250"/>
    <property type="project" value="UniProtKB"/>
</dbReference>
<dbReference type="GO" id="GO:0008104">
    <property type="term" value="P:protein localization"/>
    <property type="evidence" value="ECO:0000250"/>
    <property type="project" value="UniProtKB"/>
</dbReference>
<dbReference type="GO" id="GO:1902414">
    <property type="term" value="P:protein localization to cell junction"/>
    <property type="evidence" value="ECO:0000315"/>
    <property type="project" value="MGI"/>
</dbReference>
<dbReference type="GO" id="GO:0001558">
    <property type="term" value="P:regulation of cell growth"/>
    <property type="evidence" value="ECO:0000250"/>
    <property type="project" value="UniProtKB"/>
</dbReference>
<dbReference type="GO" id="GO:0150116">
    <property type="term" value="P:regulation of cell-substrate junction organization"/>
    <property type="evidence" value="ECO:0000314"/>
    <property type="project" value="MGI"/>
</dbReference>
<dbReference type="GO" id="GO:0038202">
    <property type="term" value="P:TORC1 signaling"/>
    <property type="evidence" value="ECO:0000303"/>
    <property type="project" value="ComplexPortal"/>
</dbReference>
<dbReference type="FunFam" id="3.30.450.30:FF:000004">
    <property type="entry name" value="ragulator complex protein LAMTOR2"/>
    <property type="match status" value="1"/>
</dbReference>
<dbReference type="Gene3D" id="3.30.450.30">
    <property type="entry name" value="Dynein light chain 2a, cytoplasmic"/>
    <property type="match status" value="1"/>
</dbReference>
<dbReference type="InterPro" id="IPR037587">
    <property type="entry name" value="LAMTOR2-like"/>
</dbReference>
<dbReference type="InterPro" id="IPR004942">
    <property type="entry name" value="Roadblock/LAMTOR2_dom"/>
</dbReference>
<dbReference type="PANTHER" id="PTHR13323">
    <property type="entry name" value="LATE ENDOSOMAL/LYSOSOMAL MP1 INTERACTING PROTEIN"/>
    <property type="match status" value="1"/>
</dbReference>
<dbReference type="Pfam" id="PF03259">
    <property type="entry name" value="Robl_LC7"/>
    <property type="match status" value="1"/>
</dbReference>
<dbReference type="SMART" id="SM00960">
    <property type="entry name" value="Robl_LC7"/>
    <property type="match status" value="1"/>
</dbReference>
<dbReference type="SUPFAM" id="SSF103196">
    <property type="entry name" value="Roadblock/LC7 domain"/>
    <property type="match status" value="1"/>
</dbReference>
<organism>
    <name type="scientific">Mus musculus</name>
    <name type="common">Mouse</name>
    <dbReference type="NCBI Taxonomy" id="10090"/>
    <lineage>
        <taxon>Eukaryota</taxon>
        <taxon>Metazoa</taxon>
        <taxon>Chordata</taxon>
        <taxon>Craniata</taxon>
        <taxon>Vertebrata</taxon>
        <taxon>Euteleostomi</taxon>
        <taxon>Mammalia</taxon>
        <taxon>Eutheria</taxon>
        <taxon>Euarchontoglires</taxon>
        <taxon>Glires</taxon>
        <taxon>Rodentia</taxon>
        <taxon>Myomorpha</taxon>
        <taxon>Muroidea</taxon>
        <taxon>Muridae</taxon>
        <taxon>Murinae</taxon>
        <taxon>Mus</taxon>
        <taxon>Mus</taxon>
    </lineage>
</organism>
<name>LTOR2_MOUSE</name>